<keyword id="KW-0028">Amino-acid biosynthesis</keyword>
<keyword id="KW-0963">Cytoplasm</keyword>
<keyword id="KW-0554">One-carbon metabolism</keyword>
<keyword id="KW-0663">Pyridoxal phosphate</keyword>
<keyword id="KW-1185">Reference proteome</keyword>
<keyword id="KW-0808">Transferase</keyword>
<dbReference type="EC" id="2.1.2.1" evidence="1"/>
<dbReference type="EMBL" id="CP000447">
    <property type="protein sequence ID" value="ABI70886.1"/>
    <property type="molecule type" value="Genomic_DNA"/>
</dbReference>
<dbReference type="RefSeq" id="WP_011636507.1">
    <property type="nucleotide sequence ID" value="NC_008345.1"/>
</dbReference>
<dbReference type="SMR" id="Q086C9"/>
<dbReference type="STRING" id="318167.Sfri_1033"/>
<dbReference type="KEGG" id="sfr:Sfri_1033"/>
<dbReference type="eggNOG" id="COG0112">
    <property type="taxonomic scope" value="Bacteria"/>
</dbReference>
<dbReference type="HOGENOM" id="CLU_022477_2_1_6"/>
<dbReference type="OrthoDB" id="9803846at2"/>
<dbReference type="UniPathway" id="UPA00193"/>
<dbReference type="UniPathway" id="UPA00288">
    <property type="reaction ID" value="UER01023"/>
</dbReference>
<dbReference type="Proteomes" id="UP000000684">
    <property type="component" value="Chromosome"/>
</dbReference>
<dbReference type="GO" id="GO:0005829">
    <property type="term" value="C:cytosol"/>
    <property type="evidence" value="ECO:0007669"/>
    <property type="project" value="TreeGrafter"/>
</dbReference>
<dbReference type="GO" id="GO:0004372">
    <property type="term" value="F:glycine hydroxymethyltransferase activity"/>
    <property type="evidence" value="ECO:0007669"/>
    <property type="project" value="UniProtKB-UniRule"/>
</dbReference>
<dbReference type="GO" id="GO:0030170">
    <property type="term" value="F:pyridoxal phosphate binding"/>
    <property type="evidence" value="ECO:0007669"/>
    <property type="project" value="UniProtKB-UniRule"/>
</dbReference>
<dbReference type="GO" id="GO:0019264">
    <property type="term" value="P:glycine biosynthetic process from serine"/>
    <property type="evidence" value="ECO:0007669"/>
    <property type="project" value="UniProtKB-UniRule"/>
</dbReference>
<dbReference type="GO" id="GO:0035999">
    <property type="term" value="P:tetrahydrofolate interconversion"/>
    <property type="evidence" value="ECO:0007669"/>
    <property type="project" value="UniProtKB-UniRule"/>
</dbReference>
<dbReference type="CDD" id="cd00378">
    <property type="entry name" value="SHMT"/>
    <property type="match status" value="1"/>
</dbReference>
<dbReference type="FunFam" id="3.40.640.10:FF:000001">
    <property type="entry name" value="Serine hydroxymethyltransferase"/>
    <property type="match status" value="1"/>
</dbReference>
<dbReference type="FunFam" id="3.90.1150.10:FF:000003">
    <property type="entry name" value="Serine hydroxymethyltransferase"/>
    <property type="match status" value="1"/>
</dbReference>
<dbReference type="Gene3D" id="3.90.1150.10">
    <property type="entry name" value="Aspartate Aminotransferase, domain 1"/>
    <property type="match status" value="1"/>
</dbReference>
<dbReference type="Gene3D" id="3.40.640.10">
    <property type="entry name" value="Type I PLP-dependent aspartate aminotransferase-like (Major domain)"/>
    <property type="match status" value="1"/>
</dbReference>
<dbReference type="HAMAP" id="MF_00051">
    <property type="entry name" value="SHMT"/>
    <property type="match status" value="1"/>
</dbReference>
<dbReference type="InterPro" id="IPR015424">
    <property type="entry name" value="PyrdxlP-dep_Trfase"/>
</dbReference>
<dbReference type="InterPro" id="IPR015421">
    <property type="entry name" value="PyrdxlP-dep_Trfase_major"/>
</dbReference>
<dbReference type="InterPro" id="IPR015422">
    <property type="entry name" value="PyrdxlP-dep_Trfase_small"/>
</dbReference>
<dbReference type="InterPro" id="IPR001085">
    <property type="entry name" value="Ser_HO-MeTrfase"/>
</dbReference>
<dbReference type="InterPro" id="IPR049943">
    <property type="entry name" value="Ser_HO-MeTrfase-like"/>
</dbReference>
<dbReference type="InterPro" id="IPR019798">
    <property type="entry name" value="Ser_HO-MeTrfase_PLP_BS"/>
</dbReference>
<dbReference type="InterPro" id="IPR039429">
    <property type="entry name" value="SHMT-like_dom"/>
</dbReference>
<dbReference type="NCBIfam" id="NF000586">
    <property type="entry name" value="PRK00011.1"/>
    <property type="match status" value="1"/>
</dbReference>
<dbReference type="PANTHER" id="PTHR11680">
    <property type="entry name" value="SERINE HYDROXYMETHYLTRANSFERASE"/>
    <property type="match status" value="1"/>
</dbReference>
<dbReference type="PANTHER" id="PTHR11680:SF50">
    <property type="entry name" value="SERINE HYDROXYMETHYLTRANSFERASE"/>
    <property type="match status" value="1"/>
</dbReference>
<dbReference type="Pfam" id="PF00464">
    <property type="entry name" value="SHMT"/>
    <property type="match status" value="1"/>
</dbReference>
<dbReference type="PIRSF" id="PIRSF000412">
    <property type="entry name" value="SHMT"/>
    <property type="match status" value="1"/>
</dbReference>
<dbReference type="SUPFAM" id="SSF53383">
    <property type="entry name" value="PLP-dependent transferases"/>
    <property type="match status" value="1"/>
</dbReference>
<dbReference type="PROSITE" id="PS00096">
    <property type="entry name" value="SHMT"/>
    <property type="match status" value="1"/>
</dbReference>
<comment type="function">
    <text evidence="1">Catalyzes the reversible interconversion of serine and glycine with tetrahydrofolate (THF) serving as the one-carbon carrier. This reaction serves as the major source of one-carbon groups required for the biosynthesis of purines, thymidylate, methionine, and other important biomolecules. Also exhibits THF-independent aldolase activity toward beta-hydroxyamino acids, producing glycine and aldehydes, via a retro-aldol mechanism.</text>
</comment>
<comment type="catalytic activity">
    <reaction evidence="1">
        <text>(6R)-5,10-methylene-5,6,7,8-tetrahydrofolate + glycine + H2O = (6S)-5,6,7,8-tetrahydrofolate + L-serine</text>
        <dbReference type="Rhea" id="RHEA:15481"/>
        <dbReference type="ChEBI" id="CHEBI:15377"/>
        <dbReference type="ChEBI" id="CHEBI:15636"/>
        <dbReference type="ChEBI" id="CHEBI:33384"/>
        <dbReference type="ChEBI" id="CHEBI:57305"/>
        <dbReference type="ChEBI" id="CHEBI:57453"/>
        <dbReference type="EC" id="2.1.2.1"/>
    </reaction>
</comment>
<comment type="cofactor">
    <cofactor evidence="1">
        <name>pyridoxal 5'-phosphate</name>
        <dbReference type="ChEBI" id="CHEBI:597326"/>
    </cofactor>
</comment>
<comment type="pathway">
    <text evidence="1">One-carbon metabolism; tetrahydrofolate interconversion.</text>
</comment>
<comment type="pathway">
    <text evidence="1">Amino-acid biosynthesis; glycine biosynthesis; glycine from L-serine: step 1/1.</text>
</comment>
<comment type="subunit">
    <text evidence="1">Homodimer.</text>
</comment>
<comment type="subcellular location">
    <subcellularLocation>
        <location evidence="1">Cytoplasm</location>
    </subcellularLocation>
</comment>
<comment type="similarity">
    <text evidence="1">Belongs to the SHMT family.</text>
</comment>
<gene>
    <name evidence="1" type="primary">glyA</name>
    <name type="ordered locus">Sfri_1033</name>
</gene>
<organism>
    <name type="scientific">Shewanella frigidimarina (strain NCIMB 400)</name>
    <dbReference type="NCBI Taxonomy" id="318167"/>
    <lineage>
        <taxon>Bacteria</taxon>
        <taxon>Pseudomonadati</taxon>
        <taxon>Pseudomonadota</taxon>
        <taxon>Gammaproteobacteria</taxon>
        <taxon>Alteromonadales</taxon>
        <taxon>Shewanellaceae</taxon>
        <taxon>Shewanella</taxon>
    </lineage>
</organism>
<protein>
    <recommendedName>
        <fullName evidence="1">Serine hydroxymethyltransferase</fullName>
        <shortName evidence="1">SHMT</shortName>
        <shortName evidence="1">Serine methylase</shortName>
        <ecNumber evidence="1">2.1.2.1</ecNumber>
    </recommendedName>
</protein>
<feature type="chain" id="PRO_1000006316" description="Serine hydroxymethyltransferase">
    <location>
        <begin position="1"/>
        <end position="417"/>
    </location>
</feature>
<feature type="binding site" evidence="1">
    <location>
        <position position="121"/>
    </location>
    <ligand>
        <name>(6S)-5,6,7,8-tetrahydrofolate</name>
        <dbReference type="ChEBI" id="CHEBI:57453"/>
    </ligand>
</feature>
<feature type="binding site" evidence="1">
    <location>
        <begin position="125"/>
        <end position="127"/>
    </location>
    <ligand>
        <name>(6S)-5,6,7,8-tetrahydrofolate</name>
        <dbReference type="ChEBI" id="CHEBI:57453"/>
    </ligand>
</feature>
<feature type="binding site" evidence="1">
    <location>
        <begin position="355"/>
        <end position="357"/>
    </location>
    <ligand>
        <name>(6S)-5,6,7,8-tetrahydrofolate</name>
        <dbReference type="ChEBI" id="CHEBI:57453"/>
    </ligand>
</feature>
<feature type="site" description="Plays an important role in substrate specificity" evidence="1">
    <location>
        <position position="228"/>
    </location>
</feature>
<feature type="modified residue" description="N6-(pyridoxal phosphate)lysine" evidence="1">
    <location>
        <position position="229"/>
    </location>
</feature>
<reference key="1">
    <citation type="submission" date="2006-08" db="EMBL/GenBank/DDBJ databases">
        <title>Complete sequence of Shewanella frigidimarina NCIMB 400.</title>
        <authorList>
            <consortium name="US DOE Joint Genome Institute"/>
            <person name="Copeland A."/>
            <person name="Lucas S."/>
            <person name="Lapidus A."/>
            <person name="Barry K."/>
            <person name="Detter J.C."/>
            <person name="Glavina del Rio T."/>
            <person name="Hammon N."/>
            <person name="Israni S."/>
            <person name="Dalin E."/>
            <person name="Tice H."/>
            <person name="Pitluck S."/>
            <person name="Fredrickson J.K."/>
            <person name="Kolker E."/>
            <person name="McCuel L.A."/>
            <person name="DiChristina T."/>
            <person name="Nealson K.H."/>
            <person name="Newman D."/>
            <person name="Tiedje J.M."/>
            <person name="Zhou J."/>
            <person name="Romine M.F."/>
            <person name="Culley D.E."/>
            <person name="Serres M."/>
            <person name="Chertkov O."/>
            <person name="Brettin T."/>
            <person name="Bruce D."/>
            <person name="Han C."/>
            <person name="Tapia R."/>
            <person name="Gilna P."/>
            <person name="Schmutz J."/>
            <person name="Larimer F."/>
            <person name="Land M."/>
            <person name="Hauser L."/>
            <person name="Kyrpides N."/>
            <person name="Mikhailova N."/>
            <person name="Richardson P."/>
        </authorList>
    </citation>
    <scope>NUCLEOTIDE SEQUENCE [LARGE SCALE GENOMIC DNA]</scope>
    <source>
        <strain>NCIMB 400</strain>
    </source>
</reference>
<proteinExistence type="inferred from homology"/>
<evidence type="ECO:0000255" key="1">
    <source>
        <dbReference type="HAMAP-Rule" id="MF_00051"/>
    </source>
</evidence>
<name>GLYA_SHEFN</name>
<sequence>MLKKAMNIADYDPELFKAIEDETCRQEEHIELIASENYTSPRVMEAQGSQLTNKYAEGYPGKRYYGGCEYVDVVETLAIERAKELFGATYANVQPHSGSQANSAVFMALLQPGDTVLGMNLAHGGHLTHGSPVNFSGKLYNIIPYGIDEAGKIDYDEMERLAIEHKPKMIIGGFSAFSGIVDWARMREIADKIGAYLFVDMAHVAGLIAAGVYPTPVPHAHVVTSTTHKTLAGPRGGIIISAADDEVLYKKLNSAVFPGGQGGPLMHVIAGKAVAFKEALEPEFKVYQQQVVKNAKAMVEVFLARGYKIVSGGTENHLMLVDLIGRDLTGKEADAALGSANITVNKNSVPNDPRSPFVTSGIRIGSPAITRRGFKEAEAKELTGWICDILDDATNTVVTDRVKGQVLALCARFPVYG</sequence>
<accession>Q086C9</accession>